<proteinExistence type="evidence at transcript level"/>
<comment type="function">
    <text evidence="1">May be involved in the regulation of cell differentiation.</text>
</comment>
<comment type="subcellular location">
    <subcellularLocation>
        <location evidence="1">Membrane</location>
        <topology evidence="4">Multi-pass membrane protein</topology>
    </subcellularLocation>
</comment>
<comment type="alternative products">
    <event type="alternative splicing"/>
    <isoform>
        <id>Q9C7C1-1</id>
        <name>1</name>
        <sequence type="displayed"/>
    </isoform>
    <isoform>
        <id>Q9C7C1-2</id>
        <name>2</name>
        <sequence type="described" ref="VSP_045055"/>
    </isoform>
</comment>
<comment type="similarity">
    <text evidence="4">Belongs to the tetraspanin (TM4SF) family.</text>
</comment>
<comment type="sequence caution" evidence="4">
    <conflict type="erroneous gene model prediction">
        <sequence resource="EMBL-CDS" id="BAB01957"/>
    </conflict>
</comment>
<dbReference type="EMBL" id="AP002063">
    <property type="protein sequence ID" value="BAB01957.1"/>
    <property type="status" value="ALT_SEQ"/>
    <property type="molecule type" value="Genomic_DNA"/>
</dbReference>
<dbReference type="EMBL" id="AC069473">
    <property type="protein sequence ID" value="AAG51049.1"/>
    <property type="molecule type" value="Genomic_DNA"/>
</dbReference>
<dbReference type="EMBL" id="CP002686">
    <property type="protein sequence ID" value="AEE75148.1"/>
    <property type="molecule type" value="Genomic_DNA"/>
</dbReference>
<dbReference type="EMBL" id="AY090367">
    <property type="protein sequence ID" value="AAL91270.1"/>
    <property type="molecule type" value="mRNA"/>
</dbReference>
<dbReference type="EMBL" id="AY088667">
    <property type="protein sequence ID" value="AAM66989.1"/>
    <property type="molecule type" value="mRNA"/>
</dbReference>
<dbReference type="RefSeq" id="NP_566411.2">
    <molecule id="Q9C7C1-1"/>
    <property type="nucleotide sequence ID" value="NM_112044.4"/>
</dbReference>
<dbReference type="BioGRID" id="5717">
    <property type="interactions" value="35"/>
</dbReference>
<dbReference type="FunCoup" id="Q9C7C1">
    <property type="interactions" value="152"/>
</dbReference>
<dbReference type="IntAct" id="Q9C7C1">
    <property type="interactions" value="35"/>
</dbReference>
<dbReference type="STRING" id="3702.Q9C7C1"/>
<dbReference type="PaxDb" id="3702-AT3G12090.1"/>
<dbReference type="ProteomicsDB" id="232823">
    <molecule id="Q9C7C1-1"/>
</dbReference>
<dbReference type="EnsemblPlants" id="AT3G12090.1">
    <molecule id="Q9C7C1-1"/>
    <property type="protein sequence ID" value="AT3G12090.1"/>
    <property type="gene ID" value="AT3G12090"/>
</dbReference>
<dbReference type="GeneID" id="820383"/>
<dbReference type="Gramene" id="AT3G12090.1">
    <molecule id="Q9C7C1-1"/>
    <property type="protein sequence ID" value="AT3G12090.1"/>
    <property type="gene ID" value="AT3G12090"/>
</dbReference>
<dbReference type="KEGG" id="ath:AT3G12090"/>
<dbReference type="Araport" id="AT3G12090"/>
<dbReference type="TAIR" id="AT3G12090">
    <property type="gene designation" value="TET6"/>
</dbReference>
<dbReference type="eggNOG" id="ENOG502QT0N">
    <property type="taxonomic scope" value="Eukaryota"/>
</dbReference>
<dbReference type="HOGENOM" id="CLU_066970_0_0_1"/>
<dbReference type="InParanoid" id="Q9C7C1"/>
<dbReference type="OMA" id="RWWHERR"/>
<dbReference type="OrthoDB" id="620353at2759"/>
<dbReference type="PhylomeDB" id="Q9C7C1"/>
<dbReference type="PRO" id="PR:Q9C7C1"/>
<dbReference type="Proteomes" id="UP000006548">
    <property type="component" value="Chromosome 3"/>
</dbReference>
<dbReference type="ExpressionAtlas" id="Q9C7C1">
    <property type="expression patterns" value="baseline and differential"/>
</dbReference>
<dbReference type="GO" id="GO:0016020">
    <property type="term" value="C:membrane"/>
    <property type="evidence" value="ECO:0007669"/>
    <property type="project" value="UniProtKB-SubCell"/>
</dbReference>
<dbReference type="GO" id="GO:0009734">
    <property type="term" value="P:auxin-activated signaling pathway"/>
    <property type="evidence" value="ECO:0007669"/>
    <property type="project" value="InterPro"/>
</dbReference>
<dbReference type="GO" id="GO:0035265">
    <property type="term" value="P:organ growth"/>
    <property type="evidence" value="ECO:0000316"/>
    <property type="project" value="TAIR"/>
</dbReference>
<dbReference type="InterPro" id="IPR044991">
    <property type="entry name" value="TET_plant"/>
</dbReference>
<dbReference type="InterPro" id="IPR018499">
    <property type="entry name" value="Tetraspanin/Peripherin"/>
</dbReference>
<dbReference type="PANTHER" id="PTHR32191">
    <property type="entry name" value="TETRASPANIN-8-RELATED"/>
    <property type="match status" value="1"/>
</dbReference>
<dbReference type="Pfam" id="PF00335">
    <property type="entry name" value="Tetraspanin"/>
    <property type="match status" value="1"/>
</dbReference>
<feature type="chain" id="PRO_0000421046" description="Tetraspanin-6">
    <location>
        <begin position="1"/>
        <end position="282"/>
    </location>
</feature>
<feature type="topological domain" description="Cytoplasmic" evidence="2">
    <location>
        <begin position="1"/>
        <end position="7"/>
    </location>
</feature>
<feature type="transmembrane region" description="Helical" evidence="2">
    <location>
        <begin position="8"/>
        <end position="28"/>
    </location>
</feature>
<feature type="topological domain" description="Extracellular" evidence="2">
    <location>
        <begin position="29"/>
        <end position="44"/>
    </location>
</feature>
<feature type="transmembrane region" description="Helical" evidence="2">
    <location>
        <begin position="45"/>
        <end position="65"/>
    </location>
</feature>
<feature type="topological domain" description="Cytoplasmic" evidence="2">
    <location>
        <begin position="66"/>
        <end position="74"/>
    </location>
</feature>
<feature type="transmembrane region" description="Helical" evidence="2">
    <location>
        <begin position="75"/>
        <end position="95"/>
    </location>
</feature>
<feature type="topological domain" description="Extracellular" evidence="2">
    <location>
        <begin position="96"/>
        <end position="220"/>
    </location>
</feature>
<feature type="transmembrane region" description="Helical" evidence="2">
    <location>
        <begin position="221"/>
        <end position="241"/>
    </location>
</feature>
<feature type="topological domain" description="Cytoplasmic" evidence="2">
    <location>
        <begin position="242"/>
        <end position="282"/>
    </location>
</feature>
<feature type="splice variant" id="VSP_045055" description="In isoform 2." evidence="3">
    <original>MYRFSNTVIGVLNLLTLLASIPIIGTALYKARSSTTCENFLQTPLLVIGFIILIVSLAGFIGACFNVAWALWVYLVVMIFLIATLMGLTLFGLVVTSQGGGVEVPGRIYKEYRLGDYHPWLRERVRDPEYWNSIRSCILSSKTCTKIESWTTLDYFQRDMTSV</original>
    <variation>M</variation>
    <location>
        <begin position="1"/>
        <end position="163"/>
    </location>
</feature>
<gene>
    <name type="primary">TET6</name>
    <name type="ordered locus">At3g12090</name>
    <name type="ORF">T21B14.9</name>
</gene>
<protein>
    <recommendedName>
        <fullName>Tetraspanin-6</fullName>
    </recommendedName>
</protein>
<sequence length="282" mass="32256">MYRFSNTVIGVLNLLTLLASIPIIGTALYKARSSTTCENFLQTPLLVIGFIILIVSLAGFIGACFNVAWALWVYLVVMIFLIATLMGLTLFGLVVTSQGGGVEVPGRIYKEYRLGDYHPWLRERVRDPEYWNSIRSCILSSKTCTKIESWTTLDYFQRDMTSVQSGCCKPPTACTYEAGVVDGGGDCFRWNNGVEMLCYECDACKAGVLEEIRLDWRKLSVVNILVLVLLIAVYAAGCCAFHNTRHAAHPYHPSDDNRMTRVRPRWDYYWWRWWHEKKEQLY</sequence>
<accession>Q9C7C1</accession>
<accession>Q8L930</accession>
<accession>Q9LH57</accession>
<evidence type="ECO:0000250" key="1"/>
<evidence type="ECO:0000255" key="2"/>
<evidence type="ECO:0000303" key="3">
    <source ref="5"/>
</evidence>
<evidence type="ECO:0000305" key="4"/>
<organism>
    <name type="scientific">Arabidopsis thaliana</name>
    <name type="common">Mouse-ear cress</name>
    <dbReference type="NCBI Taxonomy" id="3702"/>
    <lineage>
        <taxon>Eukaryota</taxon>
        <taxon>Viridiplantae</taxon>
        <taxon>Streptophyta</taxon>
        <taxon>Embryophyta</taxon>
        <taxon>Tracheophyta</taxon>
        <taxon>Spermatophyta</taxon>
        <taxon>Magnoliopsida</taxon>
        <taxon>eudicotyledons</taxon>
        <taxon>Gunneridae</taxon>
        <taxon>Pentapetalae</taxon>
        <taxon>rosids</taxon>
        <taxon>malvids</taxon>
        <taxon>Brassicales</taxon>
        <taxon>Brassicaceae</taxon>
        <taxon>Camelineae</taxon>
        <taxon>Arabidopsis</taxon>
    </lineage>
</organism>
<keyword id="KW-0025">Alternative splicing</keyword>
<keyword id="KW-0472">Membrane</keyword>
<keyword id="KW-1185">Reference proteome</keyword>
<keyword id="KW-0812">Transmembrane</keyword>
<keyword id="KW-1133">Transmembrane helix</keyword>
<reference key="1">
    <citation type="journal article" date="2000" name="DNA Res.">
        <title>Structural analysis of Arabidopsis thaliana chromosome 3. II. Sequence features of the 4,251,695 bp regions covered by 90 P1, TAC and BAC clones.</title>
        <authorList>
            <person name="Kaneko T."/>
            <person name="Katoh T."/>
            <person name="Sato S."/>
            <person name="Nakamura Y."/>
            <person name="Asamizu E."/>
            <person name="Tabata S."/>
        </authorList>
    </citation>
    <scope>NUCLEOTIDE SEQUENCE [LARGE SCALE GENOMIC DNA]</scope>
    <source>
        <strain>cv. Columbia</strain>
    </source>
</reference>
<reference key="2">
    <citation type="journal article" date="2000" name="Nature">
        <title>Sequence and analysis of chromosome 3 of the plant Arabidopsis thaliana.</title>
        <authorList>
            <person name="Salanoubat M."/>
            <person name="Lemcke K."/>
            <person name="Rieger M."/>
            <person name="Ansorge W."/>
            <person name="Unseld M."/>
            <person name="Fartmann B."/>
            <person name="Valle G."/>
            <person name="Bloecker H."/>
            <person name="Perez-Alonso M."/>
            <person name="Obermaier B."/>
            <person name="Delseny M."/>
            <person name="Boutry M."/>
            <person name="Grivell L.A."/>
            <person name="Mache R."/>
            <person name="Puigdomenech P."/>
            <person name="De Simone V."/>
            <person name="Choisne N."/>
            <person name="Artiguenave F."/>
            <person name="Robert C."/>
            <person name="Brottier P."/>
            <person name="Wincker P."/>
            <person name="Cattolico L."/>
            <person name="Weissenbach J."/>
            <person name="Saurin W."/>
            <person name="Quetier F."/>
            <person name="Schaefer M."/>
            <person name="Mueller-Auer S."/>
            <person name="Gabel C."/>
            <person name="Fuchs M."/>
            <person name="Benes V."/>
            <person name="Wurmbach E."/>
            <person name="Drzonek H."/>
            <person name="Erfle H."/>
            <person name="Jordan N."/>
            <person name="Bangert S."/>
            <person name="Wiedelmann R."/>
            <person name="Kranz H."/>
            <person name="Voss H."/>
            <person name="Holland R."/>
            <person name="Brandt P."/>
            <person name="Nyakatura G."/>
            <person name="Vezzi A."/>
            <person name="D'Angelo M."/>
            <person name="Pallavicini A."/>
            <person name="Toppo S."/>
            <person name="Simionati B."/>
            <person name="Conrad A."/>
            <person name="Hornischer K."/>
            <person name="Kauer G."/>
            <person name="Loehnert T.-H."/>
            <person name="Nordsiek G."/>
            <person name="Reichelt J."/>
            <person name="Scharfe M."/>
            <person name="Schoen O."/>
            <person name="Bargues M."/>
            <person name="Terol J."/>
            <person name="Climent J."/>
            <person name="Navarro P."/>
            <person name="Collado C."/>
            <person name="Perez-Perez A."/>
            <person name="Ottenwaelder B."/>
            <person name="Duchemin D."/>
            <person name="Cooke R."/>
            <person name="Laudie M."/>
            <person name="Berger-Llauro C."/>
            <person name="Purnelle B."/>
            <person name="Masuy D."/>
            <person name="de Haan M."/>
            <person name="Maarse A.C."/>
            <person name="Alcaraz J.-P."/>
            <person name="Cottet A."/>
            <person name="Casacuberta E."/>
            <person name="Monfort A."/>
            <person name="Argiriou A."/>
            <person name="Flores M."/>
            <person name="Liguori R."/>
            <person name="Vitale D."/>
            <person name="Mannhaupt G."/>
            <person name="Haase D."/>
            <person name="Schoof H."/>
            <person name="Rudd S."/>
            <person name="Zaccaria P."/>
            <person name="Mewes H.-W."/>
            <person name="Mayer K.F.X."/>
            <person name="Kaul S."/>
            <person name="Town C.D."/>
            <person name="Koo H.L."/>
            <person name="Tallon L.J."/>
            <person name="Jenkins J."/>
            <person name="Rooney T."/>
            <person name="Rizzo M."/>
            <person name="Walts A."/>
            <person name="Utterback T."/>
            <person name="Fujii C.Y."/>
            <person name="Shea T.P."/>
            <person name="Creasy T.H."/>
            <person name="Haas B."/>
            <person name="Maiti R."/>
            <person name="Wu D."/>
            <person name="Peterson J."/>
            <person name="Van Aken S."/>
            <person name="Pai G."/>
            <person name="Militscher J."/>
            <person name="Sellers P."/>
            <person name="Gill J.E."/>
            <person name="Feldblyum T.V."/>
            <person name="Preuss D."/>
            <person name="Lin X."/>
            <person name="Nierman W.C."/>
            <person name="Salzberg S.L."/>
            <person name="White O."/>
            <person name="Venter J.C."/>
            <person name="Fraser C.M."/>
            <person name="Kaneko T."/>
            <person name="Nakamura Y."/>
            <person name="Sato S."/>
            <person name="Kato T."/>
            <person name="Asamizu E."/>
            <person name="Sasamoto S."/>
            <person name="Kimura T."/>
            <person name="Idesawa K."/>
            <person name="Kawashima K."/>
            <person name="Kishida Y."/>
            <person name="Kiyokawa C."/>
            <person name="Kohara M."/>
            <person name="Matsumoto M."/>
            <person name="Matsuno A."/>
            <person name="Muraki A."/>
            <person name="Nakayama S."/>
            <person name="Nakazaki N."/>
            <person name="Shinpo S."/>
            <person name="Takeuchi C."/>
            <person name="Wada T."/>
            <person name="Watanabe A."/>
            <person name="Yamada M."/>
            <person name="Yasuda M."/>
            <person name="Tabata S."/>
        </authorList>
    </citation>
    <scope>NUCLEOTIDE SEQUENCE [LARGE SCALE GENOMIC DNA]</scope>
    <source>
        <strain>cv. Columbia</strain>
    </source>
</reference>
<reference key="3">
    <citation type="journal article" date="2017" name="Plant J.">
        <title>Araport11: a complete reannotation of the Arabidopsis thaliana reference genome.</title>
        <authorList>
            <person name="Cheng C.Y."/>
            <person name="Krishnakumar V."/>
            <person name="Chan A.P."/>
            <person name="Thibaud-Nissen F."/>
            <person name="Schobel S."/>
            <person name="Town C.D."/>
        </authorList>
    </citation>
    <scope>GENOME REANNOTATION</scope>
    <source>
        <strain>cv. Columbia</strain>
    </source>
</reference>
<reference key="4">
    <citation type="journal article" date="2003" name="Science">
        <title>Empirical analysis of transcriptional activity in the Arabidopsis genome.</title>
        <authorList>
            <person name="Yamada K."/>
            <person name="Lim J."/>
            <person name="Dale J.M."/>
            <person name="Chen H."/>
            <person name="Shinn P."/>
            <person name="Palm C.J."/>
            <person name="Southwick A.M."/>
            <person name="Wu H.C."/>
            <person name="Kim C.J."/>
            <person name="Nguyen M."/>
            <person name="Pham P.K."/>
            <person name="Cheuk R.F."/>
            <person name="Karlin-Newmann G."/>
            <person name="Liu S.X."/>
            <person name="Lam B."/>
            <person name="Sakano H."/>
            <person name="Wu T."/>
            <person name="Yu G."/>
            <person name="Miranda M."/>
            <person name="Quach H.L."/>
            <person name="Tripp M."/>
            <person name="Chang C.H."/>
            <person name="Lee J.M."/>
            <person name="Toriumi M.J."/>
            <person name="Chan M.M."/>
            <person name="Tang C.C."/>
            <person name="Onodera C.S."/>
            <person name="Deng J.M."/>
            <person name="Akiyama K."/>
            <person name="Ansari Y."/>
            <person name="Arakawa T."/>
            <person name="Banh J."/>
            <person name="Banno F."/>
            <person name="Bowser L."/>
            <person name="Brooks S.Y."/>
            <person name="Carninci P."/>
            <person name="Chao Q."/>
            <person name="Choy N."/>
            <person name="Enju A."/>
            <person name="Goldsmith A.D."/>
            <person name="Gurjal M."/>
            <person name="Hansen N.F."/>
            <person name="Hayashizaki Y."/>
            <person name="Johnson-Hopson C."/>
            <person name="Hsuan V.W."/>
            <person name="Iida K."/>
            <person name="Karnes M."/>
            <person name="Khan S."/>
            <person name="Koesema E."/>
            <person name="Ishida J."/>
            <person name="Jiang P.X."/>
            <person name="Jones T."/>
            <person name="Kawai J."/>
            <person name="Kamiya A."/>
            <person name="Meyers C."/>
            <person name="Nakajima M."/>
            <person name="Narusaka M."/>
            <person name="Seki M."/>
            <person name="Sakurai T."/>
            <person name="Satou M."/>
            <person name="Tamse R."/>
            <person name="Vaysberg M."/>
            <person name="Wallender E.K."/>
            <person name="Wong C."/>
            <person name="Yamamura Y."/>
            <person name="Yuan S."/>
            <person name="Shinozaki K."/>
            <person name="Davis R.W."/>
            <person name="Theologis A."/>
            <person name="Ecker J.R."/>
        </authorList>
    </citation>
    <scope>NUCLEOTIDE SEQUENCE [LARGE SCALE MRNA] (ISOFORM 1)</scope>
    <source>
        <strain>cv. Columbia</strain>
    </source>
</reference>
<reference key="5">
    <citation type="submission" date="2002-03" db="EMBL/GenBank/DDBJ databases">
        <title>Full-length cDNA from Arabidopsis thaliana.</title>
        <authorList>
            <person name="Brover V.V."/>
            <person name="Troukhan M.E."/>
            <person name="Alexandrov N.A."/>
            <person name="Lu Y.-P."/>
            <person name="Flavell R.B."/>
            <person name="Feldmann K.A."/>
        </authorList>
    </citation>
    <scope>NUCLEOTIDE SEQUENCE [LARGE SCALE MRNA] (ISOFORM 2)</scope>
</reference>
<name>TET6_ARATH</name>